<sequence length="351" mass="38382">MKALAKLKKQPGIWIINDAPIPEYGYNDVLIKIKKTAICGTDLHIYNWDKWSQNTIPVPMITGHEFAGEVVAKGDGVTSVDIGDRVSGEGHLVCGQCRNCRAGKRHLCRKTIGIGVNVQGAFAEYLVMPAVNVFKIPDSISDDIASTFDPMGNAIHTALSFNLTGEDVLITGAGPIGLMAVKIARFCGARRIVITDINEYRLQMARDFGATVALNVAPFKNQDELVKQMRKVMSDIGMTEGFDVGLEMSGINSAISMMLDVMNHGGKLSLLGISAGDISVDWGAILFKGLTLKGIYGREMFETWYLMTSMLQAGMDMNPIITHRLHIDEFQKGFEIMKSGQCGKVILDWSS</sequence>
<gene>
    <name evidence="1" type="primary">tdh</name>
    <name type="ordered locus">FTT_0713c</name>
</gene>
<evidence type="ECO:0000255" key="1">
    <source>
        <dbReference type="HAMAP-Rule" id="MF_00627"/>
    </source>
</evidence>
<keyword id="KW-0963">Cytoplasm</keyword>
<keyword id="KW-0479">Metal-binding</keyword>
<keyword id="KW-0520">NAD</keyword>
<keyword id="KW-0560">Oxidoreductase</keyword>
<keyword id="KW-1185">Reference proteome</keyword>
<keyword id="KW-0862">Zinc</keyword>
<proteinExistence type="inferred from homology"/>
<reference key="1">
    <citation type="journal article" date="2005" name="Nat. Genet.">
        <title>The complete genome sequence of Francisella tularensis, the causative agent of tularemia.</title>
        <authorList>
            <person name="Larsson P."/>
            <person name="Oyston P.C.F."/>
            <person name="Chain P."/>
            <person name="Chu M.C."/>
            <person name="Duffield M."/>
            <person name="Fuxelius H.-H."/>
            <person name="Garcia E."/>
            <person name="Haelltorp G."/>
            <person name="Johansson D."/>
            <person name="Isherwood K.E."/>
            <person name="Karp P.D."/>
            <person name="Larsson E."/>
            <person name="Liu Y."/>
            <person name="Michell S."/>
            <person name="Prior J."/>
            <person name="Prior R."/>
            <person name="Malfatti S."/>
            <person name="Sjoestedt A."/>
            <person name="Svensson K."/>
            <person name="Thompson N."/>
            <person name="Vergez L."/>
            <person name="Wagg J.K."/>
            <person name="Wren B.W."/>
            <person name="Lindler L.E."/>
            <person name="Andersson S.G.E."/>
            <person name="Forsman M."/>
            <person name="Titball R.W."/>
        </authorList>
    </citation>
    <scope>NUCLEOTIDE SEQUENCE [LARGE SCALE GENOMIC DNA]</scope>
    <source>
        <strain>SCHU S4 / Schu 4</strain>
    </source>
</reference>
<protein>
    <recommendedName>
        <fullName evidence="1">L-threonine 3-dehydrogenase</fullName>
        <shortName evidence="1">TDH</shortName>
        <ecNumber evidence="1">1.1.1.103</ecNumber>
    </recommendedName>
</protein>
<name>TDH_FRATT</name>
<dbReference type="EC" id="1.1.1.103" evidence="1"/>
<dbReference type="EMBL" id="AJ749949">
    <property type="protein sequence ID" value="CAG45346.1"/>
    <property type="molecule type" value="Genomic_DNA"/>
</dbReference>
<dbReference type="RefSeq" id="WP_003020520.1">
    <property type="nucleotide sequence ID" value="NZ_CP010290.1"/>
</dbReference>
<dbReference type="RefSeq" id="YP_169728.1">
    <property type="nucleotide sequence ID" value="NC_006570.2"/>
</dbReference>
<dbReference type="SMR" id="Q5NGW4"/>
<dbReference type="IntAct" id="Q5NGW4">
    <property type="interactions" value="5"/>
</dbReference>
<dbReference type="STRING" id="177416.FTT_0713c"/>
<dbReference type="DNASU" id="3190755"/>
<dbReference type="EnsemblBacteria" id="CAG45346">
    <property type="protein sequence ID" value="CAG45346"/>
    <property type="gene ID" value="FTT_0713c"/>
</dbReference>
<dbReference type="KEGG" id="ftu:FTT_0713c"/>
<dbReference type="eggNOG" id="COG1063">
    <property type="taxonomic scope" value="Bacteria"/>
</dbReference>
<dbReference type="OrthoDB" id="9773078at2"/>
<dbReference type="UniPathway" id="UPA00046">
    <property type="reaction ID" value="UER00505"/>
</dbReference>
<dbReference type="Proteomes" id="UP000001174">
    <property type="component" value="Chromosome"/>
</dbReference>
<dbReference type="GO" id="GO:0005737">
    <property type="term" value="C:cytoplasm"/>
    <property type="evidence" value="ECO:0007669"/>
    <property type="project" value="UniProtKB-SubCell"/>
</dbReference>
<dbReference type="GO" id="GO:0008743">
    <property type="term" value="F:L-threonine 3-dehydrogenase activity"/>
    <property type="evidence" value="ECO:0007669"/>
    <property type="project" value="UniProtKB-UniRule"/>
</dbReference>
<dbReference type="GO" id="GO:0008270">
    <property type="term" value="F:zinc ion binding"/>
    <property type="evidence" value="ECO:0007669"/>
    <property type="project" value="UniProtKB-UniRule"/>
</dbReference>
<dbReference type="GO" id="GO:0019518">
    <property type="term" value="P:L-threonine catabolic process to glycine"/>
    <property type="evidence" value="ECO:0007669"/>
    <property type="project" value="UniProtKB-UniPathway"/>
</dbReference>
<dbReference type="Gene3D" id="3.90.180.10">
    <property type="entry name" value="Medium-chain alcohol dehydrogenases, catalytic domain"/>
    <property type="match status" value="1"/>
</dbReference>
<dbReference type="Gene3D" id="3.40.50.720">
    <property type="entry name" value="NAD(P)-binding Rossmann-like Domain"/>
    <property type="match status" value="1"/>
</dbReference>
<dbReference type="HAMAP" id="MF_00627">
    <property type="entry name" value="Thr_dehydrog"/>
    <property type="match status" value="1"/>
</dbReference>
<dbReference type="InterPro" id="IPR013149">
    <property type="entry name" value="ADH-like_C"/>
</dbReference>
<dbReference type="InterPro" id="IPR013154">
    <property type="entry name" value="ADH-like_N"/>
</dbReference>
<dbReference type="InterPro" id="IPR002328">
    <property type="entry name" value="ADH_Zn_CS"/>
</dbReference>
<dbReference type="InterPro" id="IPR011032">
    <property type="entry name" value="GroES-like_sf"/>
</dbReference>
<dbReference type="InterPro" id="IPR004627">
    <property type="entry name" value="L-Threonine_3-DHase"/>
</dbReference>
<dbReference type="InterPro" id="IPR036291">
    <property type="entry name" value="NAD(P)-bd_dom_sf"/>
</dbReference>
<dbReference type="InterPro" id="IPR050129">
    <property type="entry name" value="Zn_alcohol_dh"/>
</dbReference>
<dbReference type="NCBIfam" id="NF003808">
    <property type="entry name" value="PRK05396.1"/>
    <property type="match status" value="1"/>
</dbReference>
<dbReference type="NCBIfam" id="TIGR00692">
    <property type="entry name" value="tdh"/>
    <property type="match status" value="1"/>
</dbReference>
<dbReference type="PANTHER" id="PTHR43401">
    <property type="entry name" value="L-THREONINE 3-DEHYDROGENASE"/>
    <property type="match status" value="1"/>
</dbReference>
<dbReference type="PANTHER" id="PTHR43401:SF2">
    <property type="entry name" value="L-THREONINE 3-DEHYDROGENASE"/>
    <property type="match status" value="1"/>
</dbReference>
<dbReference type="Pfam" id="PF08240">
    <property type="entry name" value="ADH_N"/>
    <property type="match status" value="1"/>
</dbReference>
<dbReference type="Pfam" id="PF00107">
    <property type="entry name" value="ADH_zinc_N"/>
    <property type="match status" value="1"/>
</dbReference>
<dbReference type="SUPFAM" id="SSF50129">
    <property type="entry name" value="GroES-like"/>
    <property type="match status" value="1"/>
</dbReference>
<dbReference type="SUPFAM" id="SSF51735">
    <property type="entry name" value="NAD(P)-binding Rossmann-fold domains"/>
    <property type="match status" value="1"/>
</dbReference>
<dbReference type="PROSITE" id="PS00059">
    <property type="entry name" value="ADH_ZINC"/>
    <property type="match status" value="1"/>
</dbReference>
<accession>Q5NGW4</accession>
<organism>
    <name type="scientific">Francisella tularensis subsp. tularensis (strain SCHU S4 / Schu 4)</name>
    <dbReference type="NCBI Taxonomy" id="177416"/>
    <lineage>
        <taxon>Bacteria</taxon>
        <taxon>Pseudomonadati</taxon>
        <taxon>Pseudomonadota</taxon>
        <taxon>Gammaproteobacteria</taxon>
        <taxon>Thiotrichales</taxon>
        <taxon>Francisellaceae</taxon>
        <taxon>Francisella</taxon>
    </lineage>
</organism>
<comment type="function">
    <text evidence="1">Catalyzes the NAD(+)-dependent oxidation of L-threonine to 2-amino-3-ketobutyrate.</text>
</comment>
<comment type="catalytic activity">
    <reaction evidence="1">
        <text>L-threonine + NAD(+) = (2S)-2-amino-3-oxobutanoate + NADH + H(+)</text>
        <dbReference type="Rhea" id="RHEA:13161"/>
        <dbReference type="ChEBI" id="CHEBI:15378"/>
        <dbReference type="ChEBI" id="CHEBI:57540"/>
        <dbReference type="ChEBI" id="CHEBI:57926"/>
        <dbReference type="ChEBI" id="CHEBI:57945"/>
        <dbReference type="ChEBI" id="CHEBI:78948"/>
        <dbReference type="EC" id="1.1.1.103"/>
    </reaction>
</comment>
<comment type="cofactor">
    <cofactor evidence="1">
        <name>Zn(2+)</name>
        <dbReference type="ChEBI" id="CHEBI:29105"/>
    </cofactor>
    <text evidence="1">Binds 2 Zn(2+) ions per subunit.</text>
</comment>
<comment type="pathway">
    <text evidence="1">Amino-acid degradation; L-threonine degradation via oxydo-reductase pathway; glycine from L-threonine: step 1/2.</text>
</comment>
<comment type="subunit">
    <text evidence="1">Homotetramer.</text>
</comment>
<comment type="subcellular location">
    <subcellularLocation>
        <location evidence="1">Cytoplasm</location>
    </subcellularLocation>
</comment>
<comment type="similarity">
    <text evidence="1">Belongs to the zinc-containing alcohol dehydrogenase family.</text>
</comment>
<feature type="chain" id="PRO_0000160841" description="L-threonine 3-dehydrogenase">
    <location>
        <begin position="1"/>
        <end position="351"/>
    </location>
</feature>
<feature type="active site" description="Charge relay system" evidence="1">
    <location>
        <position position="41"/>
    </location>
</feature>
<feature type="active site" description="Charge relay system" evidence="1">
    <location>
        <position position="44"/>
    </location>
</feature>
<feature type="binding site" evidence="1">
    <location>
        <position position="39"/>
    </location>
    <ligand>
        <name>Zn(2+)</name>
        <dbReference type="ChEBI" id="CHEBI:29105"/>
        <label>1</label>
        <note>catalytic</note>
    </ligand>
</feature>
<feature type="binding site" evidence="1">
    <location>
        <position position="64"/>
    </location>
    <ligand>
        <name>Zn(2+)</name>
        <dbReference type="ChEBI" id="CHEBI:29105"/>
        <label>1</label>
        <note>catalytic</note>
    </ligand>
</feature>
<feature type="binding site" evidence="1">
    <location>
        <position position="65"/>
    </location>
    <ligand>
        <name>Zn(2+)</name>
        <dbReference type="ChEBI" id="CHEBI:29105"/>
        <label>1</label>
        <note>catalytic</note>
    </ligand>
</feature>
<feature type="binding site" evidence="1">
    <location>
        <position position="94"/>
    </location>
    <ligand>
        <name>Zn(2+)</name>
        <dbReference type="ChEBI" id="CHEBI:29105"/>
        <label>2</label>
    </ligand>
</feature>
<feature type="binding site" evidence="1">
    <location>
        <position position="97"/>
    </location>
    <ligand>
        <name>Zn(2+)</name>
        <dbReference type="ChEBI" id="CHEBI:29105"/>
        <label>2</label>
    </ligand>
</feature>
<feature type="binding site" evidence="1">
    <location>
        <position position="100"/>
    </location>
    <ligand>
        <name>Zn(2+)</name>
        <dbReference type="ChEBI" id="CHEBI:29105"/>
        <label>2</label>
    </ligand>
</feature>
<feature type="binding site" evidence="1">
    <location>
        <position position="108"/>
    </location>
    <ligand>
        <name>Zn(2+)</name>
        <dbReference type="ChEBI" id="CHEBI:29105"/>
        <label>2</label>
    </ligand>
</feature>
<feature type="binding site" evidence="1">
    <location>
        <position position="176"/>
    </location>
    <ligand>
        <name>NAD(+)</name>
        <dbReference type="ChEBI" id="CHEBI:57540"/>
    </ligand>
</feature>
<feature type="binding site" evidence="1">
    <location>
        <position position="196"/>
    </location>
    <ligand>
        <name>NAD(+)</name>
        <dbReference type="ChEBI" id="CHEBI:57540"/>
    </ligand>
</feature>
<feature type="binding site" evidence="1">
    <location>
        <position position="201"/>
    </location>
    <ligand>
        <name>NAD(+)</name>
        <dbReference type="ChEBI" id="CHEBI:57540"/>
    </ligand>
</feature>
<feature type="binding site" evidence="1">
    <location>
        <begin position="271"/>
        <end position="273"/>
    </location>
    <ligand>
        <name>NAD(+)</name>
        <dbReference type="ChEBI" id="CHEBI:57540"/>
    </ligand>
</feature>
<feature type="binding site" evidence="1">
    <location>
        <begin position="295"/>
        <end position="296"/>
    </location>
    <ligand>
        <name>NAD(+)</name>
        <dbReference type="ChEBI" id="CHEBI:57540"/>
    </ligand>
</feature>
<feature type="site" description="Important for catalytic activity for the proton relay mechanism but does not participate directly in the coordination of zinc atom" evidence="1">
    <location>
        <position position="149"/>
    </location>
</feature>